<keyword id="KW-0067">ATP-binding</keyword>
<keyword id="KW-0460">Magnesium</keyword>
<keyword id="KW-0464">Manganese</keyword>
<keyword id="KW-0479">Metal-binding</keyword>
<keyword id="KW-0507">mRNA processing</keyword>
<keyword id="KW-0547">Nucleotide-binding</keyword>
<keyword id="KW-0548">Nucleotidyltransferase</keyword>
<keyword id="KW-0539">Nucleus</keyword>
<keyword id="KW-0597">Phosphoprotein</keyword>
<keyword id="KW-1185">Reference proteome</keyword>
<keyword id="KW-0694">RNA-binding</keyword>
<keyword id="KW-0808">Transferase</keyword>
<keyword id="KW-0862">Zinc</keyword>
<keyword id="KW-0863">Zinc-finger</keyword>
<name>STPAP_AILME</name>
<proteinExistence type="inferred from homology"/>
<sequence>MAAVDLDVQSLPRGGFRCCLCHVTTANRPSLDAHLGGRKHRHLVELRATRKAQGLRSVFVSGFPRDVDSAQLTQYFQAFGPVASVVMDKDKGVFAIVEMGDVGTREAVLSQPQHTLGGHRLRVRPREQKEFQSPASKSPKGAAPDSHQLTKALAEAPDVGAQMVKLVGLRELSEAERQLRNLVVALMQEVFTEFFPGCVVHPFGSSINSFDVHGCDLDLFLDLGDLEESQPAPKAPESPSLDSALASPLDPQALACTPASPPDSQPPSPQDSEALDFETPSSSLAPQTPDSALASETLASPQSLPPASPLQEDRGEGDLGKALELAEALSGEKTEGVAMLELVGSILRGCVPGVYRVQTVPSARRPVVKFCHRPSGLHGDVSLSNRLALHNSRFLSLCSELDGRVRPLVYTLRCWAQGRGLSGSGPLLSNYALTLLVIYFLQTRDPPVLPTVSQLTQKAGEGEQVEVDGWDCSFPRDASGLEPSTNKEPLSSLLAQFFSCVSCWDLRGSLLSLREGQALPVAGDLPSNRWEGLRLGPMNLQDPFDLSHNVAANVTSRVAGRLQNSCQAAANYCRSLQYQRRSSRGRDWGLLPLLQPSSPSSLLSATPIPLPPAPFTQLTAALAQVLREALGCHIEQGTKRLRSDRGGPEESPQGGTSKRLKLDGEEKSCEEGREEQQGYIRDHSEDGVEEMVVEVGEMVQDWVQSPGRPGEPPQMLREQLATGEEGQSGHAALAEQGPKGPEAAREGSQGETGRGVSLSSVSWRCALWHRVWQGRRRARRRLQQQTKERGRGSAGTAEWLAVEAQVTRELRGLSSAAQRPEAEPLLTFVASASQVNQTLTVTPIQDSQGLFPDLHHFLQVFLPQALRNL</sequence>
<comment type="function">
    <text evidence="3">Poly(A) polymerase that creates the 3'-poly(A) tail of specific pre-mRNAs. Localizes to nuclear speckles together with PIP5K1A and mediates polyadenylation of a select set of mRNAs, such as HMOX1. In addition to polyadenylation, it is also required for the 3'-end cleavage of pre-mRNAs: binds to the 3'UTR of targeted pre-mRNAs and promotes the recruitment and assembly of the CPSF complex on the 3'UTR of pre-mRNAs. In addition to adenylyltransferase activity, also has uridylyltransferase activity. However, the ATP ratio is higher than UTP in cells, suggesting that it functions primarily as a poly(A) polymerase. Acts as a specific terminal uridylyltransferase for U6 snRNA in vitro: responsible for a controlled elongation reaction that results in the restoration of the four 3'-terminal UMP-residues found in newly transcribed U6 snRNA. Not involved in replication-dependent histone mRNA degradation.</text>
</comment>
<comment type="catalytic activity">
    <reaction evidence="3">
        <text>RNA(n) + UTP = RNA(n)-3'-uridine ribonucleotide + diphosphate</text>
        <dbReference type="Rhea" id="RHEA:14785"/>
        <dbReference type="Rhea" id="RHEA-COMP:14527"/>
        <dbReference type="Rhea" id="RHEA-COMP:17348"/>
        <dbReference type="ChEBI" id="CHEBI:33019"/>
        <dbReference type="ChEBI" id="CHEBI:46398"/>
        <dbReference type="ChEBI" id="CHEBI:140395"/>
        <dbReference type="ChEBI" id="CHEBI:173116"/>
        <dbReference type="EC" id="2.7.7.52"/>
    </reaction>
</comment>
<comment type="catalytic activity">
    <reaction evidence="3">
        <text>RNA(n) + ATP = RNA(n)-3'-adenine ribonucleotide + diphosphate</text>
        <dbReference type="Rhea" id="RHEA:11332"/>
        <dbReference type="Rhea" id="RHEA-COMP:14527"/>
        <dbReference type="Rhea" id="RHEA-COMP:17347"/>
        <dbReference type="ChEBI" id="CHEBI:30616"/>
        <dbReference type="ChEBI" id="CHEBI:33019"/>
        <dbReference type="ChEBI" id="CHEBI:140395"/>
        <dbReference type="ChEBI" id="CHEBI:173115"/>
        <dbReference type="EC" id="2.7.7.19"/>
    </reaction>
</comment>
<comment type="cofactor">
    <cofactor evidence="3">
        <name>Mg(2+)</name>
        <dbReference type="ChEBI" id="CHEBI:18420"/>
    </cofactor>
    <cofactor evidence="4">
        <name>Mn(2+)</name>
        <dbReference type="ChEBI" id="CHEBI:29035"/>
    </cofactor>
    <text evidence="3">Binds 1 divalent cation per subunit.</text>
</comment>
<comment type="activity regulation">
    <text evidence="3">Adenylyltransferase activity is specifically phosphatidylinositol 4,5-bisphosphate (PtdIns(4,5)P2).</text>
</comment>
<comment type="subunit">
    <text evidence="3">Associates with the cleavage and polyadenylation specificity factor (CPSF) complex. Interacts with CPSF1 and CPSF3; the interaction is direct. Interacts with PIP5K1A.</text>
</comment>
<comment type="subcellular location">
    <subcellularLocation>
        <location evidence="3">Nucleus</location>
        <location evidence="3">Nucleolus</location>
    </subcellularLocation>
    <subcellularLocation>
        <location evidence="3">Nucleus speckle</location>
    </subcellularLocation>
</comment>
<comment type="domain">
    <text evidence="3">The zinc-finger domain is required for terminal uridylyltransferase activity. Together with the RRM domain, binds the 5'-area of U6 snRNA.</text>
</comment>
<comment type="domain">
    <text evidence="3">The RRM domain is required for terminal uridylyltransferase activity. Together with the zinc-finger domain, binds the 5'-area of U6 snRNA.</text>
</comment>
<comment type="domain">
    <text evidence="3">The proline-rich region is dispensable for terminal uridylyltransferase activity.</text>
</comment>
<comment type="PTM">
    <text evidence="3">Phosphorylated by CK1 in the proline-rich (Pro-rich) region.</text>
</comment>
<comment type="similarity">
    <text evidence="9">Belongs to the DNA polymerase type-B-like family.</text>
</comment>
<dbReference type="EC" id="2.7.7.19" evidence="3"/>
<dbReference type="EC" id="2.7.7.52" evidence="3"/>
<dbReference type="EMBL" id="GL193267">
    <property type="protein sequence ID" value="EFB28167.1"/>
    <property type="molecule type" value="Genomic_DNA"/>
</dbReference>
<dbReference type="SMR" id="D2HS90"/>
<dbReference type="STRING" id="9646.ENSAMEP00000007096"/>
<dbReference type="eggNOG" id="KOG2277">
    <property type="taxonomic scope" value="Eukaryota"/>
</dbReference>
<dbReference type="HOGENOM" id="CLU_018757_1_0_1"/>
<dbReference type="InParanoid" id="D2HS90"/>
<dbReference type="Proteomes" id="UP000008912">
    <property type="component" value="Unassembled WGS sequence"/>
</dbReference>
<dbReference type="GO" id="GO:0005847">
    <property type="term" value="C:mRNA cleavage and polyadenylation specificity factor complex"/>
    <property type="evidence" value="ECO:0000250"/>
    <property type="project" value="UniProtKB"/>
</dbReference>
<dbReference type="GO" id="GO:0016607">
    <property type="term" value="C:nuclear speck"/>
    <property type="evidence" value="ECO:0000250"/>
    <property type="project" value="UniProtKB"/>
</dbReference>
<dbReference type="GO" id="GO:0005730">
    <property type="term" value="C:nucleolus"/>
    <property type="evidence" value="ECO:0000250"/>
    <property type="project" value="UniProtKB"/>
</dbReference>
<dbReference type="GO" id="GO:0005524">
    <property type="term" value="F:ATP binding"/>
    <property type="evidence" value="ECO:0007669"/>
    <property type="project" value="UniProtKB-KW"/>
</dbReference>
<dbReference type="GO" id="GO:0140767">
    <property type="term" value="F:enzyme-substrate adaptor activity"/>
    <property type="evidence" value="ECO:0000250"/>
    <property type="project" value="UniProtKB"/>
</dbReference>
<dbReference type="GO" id="GO:0003730">
    <property type="term" value="F:mRNA 3'-UTR binding"/>
    <property type="evidence" value="ECO:0000250"/>
    <property type="project" value="UniProtKB"/>
</dbReference>
<dbReference type="GO" id="GO:1990817">
    <property type="term" value="F:poly(A) RNA polymerase activity"/>
    <property type="evidence" value="ECO:0000250"/>
    <property type="project" value="UniProtKB"/>
</dbReference>
<dbReference type="GO" id="GO:0003723">
    <property type="term" value="F:RNA binding"/>
    <property type="evidence" value="ECO:0000250"/>
    <property type="project" value="UniProtKB"/>
</dbReference>
<dbReference type="GO" id="GO:0050265">
    <property type="term" value="F:RNA uridylyltransferase activity"/>
    <property type="evidence" value="ECO:0000250"/>
    <property type="project" value="UniProtKB"/>
</dbReference>
<dbReference type="GO" id="GO:0017070">
    <property type="term" value="F:U6 snRNA binding"/>
    <property type="evidence" value="ECO:0000250"/>
    <property type="project" value="UniProtKB"/>
</dbReference>
<dbReference type="GO" id="GO:0008270">
    <property type="term" value="F:zinc ion binding"/>
    <property type="evidence" value="ECO:0007669"/>
    <property type="project" value="UniProtKB-KW"/>
</dbReference>
<dbReference type="GO" id="GO:0180010">
    <property type="term" value="P:co-transcriptional mRNA 3'-end processing, cleavage and polyadenylation pathway"/>
    <property type="evidence" value="ECO:0000250"/>
    <property type="project" value="UniProtKB"/>
</dbReference>
<dbReference type="GO" id="GO:0016180">
    <property type="term" value="P:snRNA processing"/>
    <property type="evidence" value="ECO:0000250"/>
    <property type="project" value="UniProtKB"/>
</dbReference>
<dbReference type="GO" id="GO:0034477">
    <property type="term" value="P:U6 snRNA 3'-end processing"/>
    <property type="evidence" value="ECO:0000250"/>
    <property type="project" value="UniProtKB"/>
</dbReference>
<dbReference type="CDD" id="cd05402">
    <property type="entry name" value="NT_PAP_TUTase"/>
    <property type="match status" value="1"/>
</dbReference>
<dbReference type="CDD" id="cd12279">
    <property type="entry name" value="RRM_TUT1"/>
    <property type="match status" value="1"/>
</dbReference>
<dbReference type="FunFam" id="1.10.1410.10:FF:000008">
    <property type="entry name" value="speckle targeted PIP5K1A-regulated poly(A) polymerase"/>
    <property type="match status" value="1"/>
</dbReference>
<dbReference type="FunFam" id="3.30.70.330:FF:000305">
    <property type="entry name" value="speckle targeted PIP5K1A-regulated poly(A) polymerase"/>
    <property type="match status" value="1"/>
</dbReference>
<dbReference type="Gene3D" id="1.10.1410.10">
    <property type="match status" value="1"/>
</dbReference>
<dbReference type="Gene3D" id="3.30.70.330">
    <property type="match status" value="1"/>
</dbReference>
<dbReference type="Gene3D" id="3.30.460.10">
    <property type="entry name" value="Beta Polymerase, domain 2"/>
    <property type="match status" value="1"/>
</dbReference>
<dbReference type="InterPro" id="IPR054708">
    <property type="entry name" value="MTPAP-like_central"/>
</dbReference>
<dbReference type="InterPro" id="IPR043519">
    <property type="entry name" value="NT_sf"/>
</dbReference>
<dbReference type="InterPro" id="IPR012677">
    <property type="entry name" value="Nucleotide-bd_a/b_plait_sf"/>
</dbReference>
<dbReference type="InterPro" id="IPR002058">
    <property type="entry name" value="PAP_assoc"/>
</dbReference>
<dbReference type="InterPro" id="IPR035979">
    <property type="entry name" value="RBD_domain_sf"/>
</dbReference>
<dbReference type="InterPro" id="IPR000504">
    <property type="entry name" value="RRM_dom"/>
</dbReference>
<dbReference type="InterPro" id="IPR034388">
    <property type="entry name" value="Star-PAP_RRM"/>
</dbReference>
<dbReference type="InterPro" id="IPR036236">
    <property type="entry name" value="Znf_C2H2_sf"/>
</dbReference>
<dbReference type="InterPro" id="IPR013087">
    <property type="entry name" value="Znf_C2H2_type"/>
</dbReference>
<dbReference type="PANTHER" id="PTHR12271">
    <property type="entry name" value="POLY A POLYMERASE CID PAP -RELATED"/>
    <property type="match status" value="1"/>
</dbReference>
<dbReference type="PANTHER" id="PTHR12271:SF127">
    <property type="entry name" value="SPECKLE TARGETED PIP5K1A-REGULATED POLY(A) POLYMERASE"/>
    <property type="match status" value="1"/>
</dbReference>
<dbReference type="Pfam" id="PF22600">
    <property type="entry name" value="MTPAP-like_central"/>
    <property type="match status" value="2"/>
</dbReference>
<dbReference type="Pfam" id="PF03828">
    <property type="entry name" value="PAP_assoc"/>
    <property type="match status" value="1"/>
</dbReference>
<dbReference type="Pfam" id="PF00076">
    <property type="entry name" value="RRM_1"/>
    <property type="match status" value="1"/>
</dbReference>
<dbReference type="Pfam" id="PF12874">
    <property type="entry name" value="zf-met"/>
    <property type="match status" value="1"/>
</dbReference>
<dbReference type="SMART" id="SM00360">
    <property type="entry name" value="RRM"/>
    <property type="match status" value="1"/>
</dbReference>
<dbReference type="SUPFAM" id="SSF57667">
    <property type="entry name" value="beta-beta-alpha zinc fingers"/>
    <property type="match status" value="1"/>
</dbReference>
<dbReference type="SUPFAM" id="SSF81301">
    <property type="entry name" value="Nucleotidyltransferase"/>
    <property type="match status" value="1"/>
</dbReference>
<dbReference type="SUPFAM" id="SSF81631">
    <property type="entry name" value="PAP/OAS1 substrate-binding domain"/>
    <property type="match status" value="1"/>
</dbReference>
<dbReference type="SUPFAM" id="SSF54928">
    <property type="entry name" value="RNA-binding domain, RBD"/>
    <property type="match status" value="1"/>
</dbReference>
<dbReference type="PROSITE" id="PS50102">
    <property type="entry name" value="RRM"/>
    <property type="match status" value="1"/>
</dbReference>
<evidence type="ECO:0000250" key="1">
    <source>
        <dbReference type="UniProtKB" id="Q3MHT4"/>
    </source>
</evidence>
<evidence type="ECO:0000250" key="2">
    <source>
        <dbReference type="UniProtKB" id="Q8R3F9"/>
    </source>
</evidence>
<evidence type="ECO:0000250" key="3">
    <source>
        <dbReference type="UniProtKB" id="Q9H6E5"/>
    </source>
</evidence>
<evidence type="ECO:0000250" key="4">
    <source>
        <dbReference type="UniProtKB" id="Q9NVV4"/>
    </source>
</evidence>
<evidence type="ECO:0000255" key="5"/>
<evidence type="ECO:0000255" key="6">
    <source>
        <dbReference type="PROSITE-ProRule" id="PRU00130"/>
    </source>
</evidence>
<evidence type="ECO:0000255" key="7">
    <source>
        <dbReference type="PROSITE-ProRule" id="PRU00176"/>
    </source>
</evidence>
<evidence type="ECO:0000256" key="8">
    <source>
        <dbReference type="SAM" id="MobiDB-lite"/>
    </source>
</evidence>
<evidence type="ECO:0000305" key="9"/>
<gene>
    <name type="primary">TUT1</name>
    <name type="synonym">RBM21</name>
    <name type="ORF">PANDA_014931</name>
</gene>
<protein>
    <recommendedName>
        <fullName>Speckle targeted PIP5K1A-regulated poly(A) polymerase</fullName>
        <shortName>Star-PAP</shortName>
        <ecNumber evidence="3">2.7.7.19</ecNumber>
    </recommendedName>
    <alternativeName>
        <fullName>RNA-binding motif protein 21</fullName>
        <shortName>RNA-binding protein 21</shortName>
    </alternativeName>
    <alternativeName>
        <fullName>U6 snRNA-specific terminal uridylyltransferase 1</fullName>
        <shortName>U6-TUTase</shortName>
        <ecNumber evidence="3">2.7.7.52</ecNumber>
    </alternativeName>
</protein>
<feature type="chain" id="PRO_0000404589" description="Speckle targeted PIP5K1A-regulated poly(A) polymerase">
    <location>
        <begin position="1"/>
        <end position="869"/>
    </location>
</feature>
<feature type="domain" description="RRM" evidence="7">
    <location>
        <begin position="56"/>
        <end position="128"/>
    </location>
</feature>
<feature type="domain" description="PAP-associated" evidence="5">
    <location>
        <begin position="490"/>
        <end position="548"/>
    </location>
</feature>
<feature type="zinc finger region" description="Matrin-type" evidence="6">
    <location>
        <begin position="16"/>
        <end position="46"/>
    </location>
</feature>
<feature type="region of interest" description="Disordered" evidence="8">
    <location>
        <begin position="111"/>
        <end position="147"/>
    </location>
</feature>
<feature type="region of interest" description="Disordered" evidence="8">
    <location>
        <begin position="252"/>
        <end position="315"/>
    </location>
</feature>
<feature type="region of interest" description="KA1; binds the bulging loops of U6 snRNA but is dispensable for terminal uridylyltransferase activity" evidence="3">
    <location>
        <begin position="597"/>
        <end position="869"/>
    </location>
</feature>
<feature type="region of interest" description="Disordered" evidence="8">
    <location>
        <begin position="637"/>
        <end position="686"/>
    </location>
</feature>
<feature type="region of interest" description="Disordered" evidence="8">
    <location>
        <begin position="720"/>
        <end position="755"/>
    </location>
</feature>
<feature type="compositionally biased region" description="Pro residues" evidence="8">
    <location>
        <begin position="259"/>
        <end position="269"/>
    </location>
</feature>
<feature type="compositionally biased region" description="Polar residues" evidence="8">
    <location>
        <begin position="279"/>
        <end position="290"/>
    </location>
</feature>
<feature type="compositionally biased region" description="Basic and acidic residues" evidence="8">
    <location>
        <begin position="637"/>
        <end position="648"/>
    </location>
</feature>
<feature type="compositionally biased region" description="Basic and acidic residues" evidence="8">
    <location>
        <begin position="660"/>
        <end position="686"/>
    </location>
</feature>
<feature type="binding site" evidence="3">
    <location>
        <position position="205"/>
    </location>
    <ligand>
        <name>ATP</name>
        <dbReference type="ChEBI" id="CHEBI:30616"/>
    </ligand>
</feature>
<feature type="binding site" evidence="3">
    <location>
        <position position="216"/>
    </location>
    <ligand>
        <name>Mg(2+)</name>
        <dbReference type="ChEBI" id="CHEBI:18420"/>
        <note>catalytic</note>
    </ligand>
</feature>
<feature type="binding site" evidence="3">
    <location>
        <position position="216"/>
    </location>
    <ligand>
        <name>UTP</name>
        <dbReference type="ChEBI" id="CHEBI:46398"/>
    </ligand>
</feature>
<feature type="binding site" evidence="3">
    <location>
        <position position="218"/>
    </location>
    <ligand>
        <name>Mg(2+)</name>
        <dbReference type="ChEBI" id="CHEBI:18420"/>
        <note>catalytic</note>
    </ligand>
</feature>
<feature type="binding site" evidence="3">
    <location>
        <position position="218"/>
    </location>
    <ligand>
        <name>UTP</name>
        <dbReference type="ChEBI" id="CHEBI:46398"/>
    </ligand>
</feature>
<feature type="binding site" evidence="3">
    <location>
        <position position="391"/>
    </location>
    <ligand>
        <name>ATP</name>
        <dbReference type="ChEBI" id="CHEBI:30616"/>
    </ligand>
</feature>
<feature type="binding site" evidence="3">
    <location>
        <position position="391"/>
    </location>
    <ligand>
        <name>UTP</name>
        <dbReference type="ChEBI" id="CHEBI:46398"/>
    </ligand>
</feature>
<feature type="binding site" evidence="3">
    <location>
        <position position="413"/>
    </location>
    <ligand>
        <name>UTP</name>
        <dbReference type="ChEBI" id="CHEBI:46398"/>
    </ligand>
</feature>
<feature type="binding site" evidence="3">
    <location>
        <position position="431"/>
    </location>
    <ligand>
        <name>UTP</name>
        <dbReference type="ChEBI" id="CHEBI:46398"/>
    </ligand>
</feature>
<feature type="binding site" evidence="3">
    <location>
        <position position="548"/>
    </location>
    <ligand>
        <name>UTP</name>
        <dbReference type="ChEBI" id="CHEBI:46398"/>
    </ligand>
</feature>
<feature type="modified residue" description="Phosphoserine" evidence="2">
    <location>
        <position position="684"/>
    </location>
</feature>
<feature type="modified residue" description="Phosphoserine" evidence="1">
    <location>
        <position position="748"/>
    </location>
</feature>
<reference key="1">
    <citation type="journal article" date="2010" name="Nature">
        <title>The sequence and de novo assembly of the giant panda genome.</title>
        <authorList>
            <person name="Li R."/>
            <person name="Fan W."/>
            <person name="Tian G."/>
            <person name="Zhu H."/>
            <person name="He L."/>
            <person name="Cai J."/>
            <person name="Huang Q."/>
            <person name="Cai Q."/>
            <person name="Li B."/>
            <person name="Bai Y."/>
            <person name="Zhang Z."/>
            <person name="Zhang Y."/>
            <person name="Wang W."/>
            <person name="Li J."/>
            <person name="Wei F."/>
            <person name="Li H."/>
            <person name="Jian M."/>
            <person name="Li J."/>
            <person name="Zhang Z."/>
            <person name="Nielsen R."/>
            <person name="Li D."/>
            <person name="Gu W."/>
            <person name="Yang Z."/>
            <person name="Xuan Z."/>
            <person name="Ryder O.A."/>
            <person name="Leung F.C."/>
            <person name="Zhou Y."/>
            <person name="Cao J."/>
            <person name="Sun X."/>
            <person name="Fu Y."/>
            <person name="Fang X."/>
            <person name="Guo X."/>
            <person name="Wang B."/>
            <person name="Hou R."/>
            <person name="Shen F."/>
            <person name="Mu B."/>
            <person name="Ni P."/>
            <person name="Lin R."/>
            <person name="Qian W."/>
            <person name="Wang G."/>
            <person name="Yu C."/>
            <person name="Nie W."/>
            <person name="Wang J."/>
            <person name="Wu Z."/>
            <person name="Liang H."/>
            <person name="Min J."/>
            <person name="Wu Q."/>
            <person name="Cheng S."/>
            <person name="Ruan J."/>
            <person name="Wang M."/>
            <person name="Shi Z."/>
            <person name="Wen M."/>
            <person name="Liu B."/>
            <person name="Ren X."/>
            <person name="Zheng H."/>
            <person name="Dong D."/>
            <person name="Cook K."/>
            <person name="Shan G."/>
            <person name="Zhang H."/>
            <person name="Kosiol C."/>
            <person name="Xie X."/>
            <person name="Lu Z."/>
            <person name="Zheng H."/>
            <person name="Li Y."/>
            <person name="Steiner C.C."/>
            <person name="Lam T.T."/>
            <person name="Lin S."/>
            <person name="Zhang Q."/>
            <person name="Li G."/>
            <person name="Tian J."/>
            <person name="Gong T."/>
            <person name="Liu H."/>
            <person name="Zhang D."/>
            <person name="Fang L."/>
            <person name="Ye C."/>
            <person name="Zhang J."/>
            <person name="Hu W."/>
            <person name="Xu A."/>
            <person name="Ren Y."/>
            <person name="Zhang G."/>
            <person name="Bruford M.W."/>
            <person name="Li Q."/>
            <person name="Ma L."/>
            <person name="Guo Y."/>
            <person name="An N."/>
            <person name="Hu Y."/>
            <person name="Zheng Y."/>
            <person name="Shi Y."/>
            <person name="Li Z."/>
            <person name="Liu Q."/>
            <person name="Chen Y."/>
            <person name="Zhao J."/>
            <person name="Qu N."/>
            <person name="Zhao S."/>
            <person name="Tian F."/>
            <person name="Wang X."/>
            <person name="Wang H."/>
            <person name="Xu L."/>
            <person name="Liu X."/>
            <person name="Vinar T."/>
            <person name="Wang Y."/>
            <person name="Lam T.W."/>
            <person name="Yiu S.M."/>
            <person name="Liu S."/>
            <person name="Zhang H."/>
            <person name="Li D."/>
            <person name="Huang Y."/>
            <person name="Wang X."/>
            <person name="Yang G."/>
            <person name="Jiang Z."/>
            <person name="Wang J."/>
            <person name="Qin N."/>
            <person name="Li L."/>
            <person name="Li J."/>
            <person name="Bolund L."/>
            <person name="Kristiansen K."/>
            <person name="Wong G.K."/>
            <person name="Olson M."/>
            <person name="Zhang X."/>
            <person name="Li S."/>
            <person name="Yang H."/>
            <person name="Wang J."/>
            <person name="Wang J."/>
        </authorList>
    </citation>
    <scope>NUCLEOTIDE SEQUENCE [LARGE SCALE GENOMIC DNA]</scope>
</reference>
<organism>
    <name type="scientific">Ailuropoda melanoleuca</name>
    <name type="common">Giant panda</name>
    <dbReference type="NCBI Taxonomy" id="9646"/>
    <lineage>
        <taxon>Eukaryota</taxon>
        <taxon>Metazoa</taxon>
        <taxon>Chordata</taxon>
        <taxon>Craniata</taxon>
        <taxon>Vertebrata</taxon>
        <taxon>Euteleostomi</taxon>
        <taxon>Mammalia</taxon>
        <taxon>Eutheria</taxon>
        <taxon>Laurasiatheria</taxon>
        <taxon>Carnivora</taxon>
        <taxon>Caniformia</taxon>
        <taxon>Ursidae</taxon>
        <taxon>Ailuropoda</taxon>
    </lineage>
</organism>
<accession>D2HS90</accession>